<gene>
    <name evidence="1" type="primary">nuoA</name>
    <name type="ordered locus">RSc2062</name>
</gene>
<dbReference type="EC" id="7.1.1.-" evidence="1"/>
<dbReference type="EMBL" id="AL646052">
    <property type="protein sequence ID" value="CAD15769.1"/>
    <property type="molecule type" value="Genomic_DNA"/>
</dbReference>
<dbReference type="RefSeq" id="WP_011001994.1">
    <property type="nucleotide sequence ID" value="NC_003295.1"/>
</dbReference>
<dbReference type="SMR" id="Q8XXQ1"/>
<dbReference type="STRING" id="267608.RSc2062"/>
<dbReference type="EnsemblBacteria" id="CAD15769">
    <property type="protein sequence ID" value="CAD15769"/>
    <property type="gene ID" value="RSc2062"/>
</dbReference>
<dbReference type="KEGG" id="rso:RSc2062"/>
<dbReference type="eggNOG" id="COG0838">
    <property type="taxonomic scope" value="Bacteria"/>
</dbReference>
<dbReference type="HOGENOM" id="CLU_119549_3_1_4"/>
<dbReference type="Proteomes" id="UP000001436">
    <property type="component" value="Chromosome"/>
</dbReference>
<dbReference type="GO" id="GO:0030964">
    <property type="term" value="C:NADH dehydrogenase complex"/>
    <property type="evidence" value="ECO:0007669"/>
    <property type="project" value="TreeGrafter"/>
</dbReference>
<dbReference type="GO" id="GO:0005886">
    <property type="term" value="C:plasma membrane"/>
    <property type="evidence" value="ECO:0007669"/>
    <property type="project" value="UniProtKB-SubCell"/>
</dbReference>
<dbReference type="GO" id="GO:0008137">
    <property type="term" value="F:NADH dehydrogenase (ubiquinone) activity"/>
    <property type="evidence" value="ECO:0007669"/>
    <property type="project" value="InterPro"/>
</dbReference>
<dbReference type="GO" id="GO:0050136">
    <property type="term" value="F:NADH:ubiquinone reductase (non-electrogenic) activity"/>
    <property type="evidence" value="ECO:0007669"/>
    <property type="project" value="UniProtKB-UniRule"/>
</dbReference>
<dbReference type="GO" id="GO:0048038">
    <property type="term" value="F:quinone binding"/>
    <property type="evidence" value="ECO:0007669"/>
    <property type="project" value="UniProtKB-KW"/>
</dbReference>
<dbReference type="FunFam" id="1.20.58.1610:FF:000004">
    <property type="entry name" value="NADH-quinone oxidoreductase subunit A"/>
    <property type="match status" value="1"/>
</dbReference>
<dbReference type="Gene3D" id="1.20.58.1610">
    <property type="entry name" value="NADH:ubiquinone/plastoquinone oxidoreductase, chain 3"/>
    <property type="match status" value="1"/>
</dbReference>
<dbReference type="HAMAP" id="MF_01394">
    <property type="entry name" value="NDH1_NuoA"/>
    <property type="match status" value="1"/>
</dbReference>
<dbReference type="InterPro" id="IPR023043">
    <property type="entry name" value="NAD(P)H_OxRDtase_bac/plastid"/>
</dbReference>
<dbReference type="InterPro" id="IPR000440">
    <property type="entry name" value="NADH_UbQ/plastoQ_OxRdtase_su3"/>
</dbReference>
<dbReference type="InterPro" id="IPR038430">
    <property type="entry name" value="NDAH_ubi_oxred_su3_sf"/>
</dbReference>
<dbReference type="PANTHER" id="PTHR11058">
    <property type="entry name" value="NADH-UBIQUINONE OXIDOREDUCTASE CHAIN 3"/>
    <property type="match status" value="1"/>
</dbReference>
<dbReference type="PANTHER" id="PTHR11058:SF9">
    <property type="entry name" value="NADH-UBIQUINONE OXIDOREDUCTASE CHAIN 3"/>
    <property type="match status" value="1"/>
</dbReference>
<dbReference type="Pfam" id="PF00507">
    <property type="entry name" value="Oxidored_q4"/>
    <property type="match status" value="1"/>
</dbReference>
<name>NUOA_RALN1</name>
<proteinExistence type="inferred from homology"/>
<protein>
    <recommendedName>
        <fullName evidence="1">NADH-quinone oxidoreductase subunit A</fullName>
        <ecNumber evidence="1">7.1.1.-</ecNumber>
    </recommendedName>
    <alternativeName>
        <fullName evidence="1">NADH dehydrogenase I subunit A</fullName>
    </alternativeName>
    <alternativeName>
        <fullName evidence="1">NDH-1 subunit A</fullName>
    </alternativeName>
    <alternativeName>
        <fullName evidence="1">NUO1</fullName>
    </alternativeName>
</protein>
<keyword id="KW-0997">Cell inner membrane</keyword>
<keyword id="KW-1003">Cell membrane</keyword>
<keyword id="KW-0472">Membrane</keyword>
<keyword id="KW-0520">NAD</keyword>
<keyword id="KW-0874">Quinone</keyword>
<keyword id="KW-1185">Reference proteome</keyword>
<keyword id="KW-1278">Translocase</keyword>
<keyword id="KW-0812">Transmembrane</keyword>
<keyword id="KW-1133">Transmembrane helix</keyword>
<keyword id="KW-0813">Transport</keyword>
<keyword id="KW-0830">Ubiquinone</keyword>
<reference key="1">
    <citation type="journal article" date="2002" name="Nature">
        <title>Genome sequence of the plant pathogen Ralstonia solanacearum.</title>
        <authorList>
            <person name="Salanoubat M."/>
            <person name="Genin S."/>
            <person name="Artiguenave F."/>
            <person name="Gouzy J."/>
            <person name="Mangenot S."/>
            <person name="Arlat M."/>
            <person name="Billault A."/>
            <person name="Brottier P."/>
            <person name="Camus J.-C."/>
            <person name="Cattolico L."/>
            <person name="Chandler M."/>
            <person name="Choisne N."/>
            <person name="Claudel-Renard C."/>
            <person name="Cunnac S."/>
            <person name="Demange N."/>
            <person name="Gaspin C."/>
            <person name="Lavie M."/>
            <person name="Moisan A."/>
            <person name="Robert C."/>
            <person name="Saurin W."/>
            <person name="Schiex T."/>
            <person name="Siguier P."/>
            <person name="Thebault P."/>
            <person name="Whalen M."/>
            <person name="Wincker P."/>
            <person name="Levy M."/>
            <person name="Weissenbach J."/>
            <person name="Boucher C.A."/>
        </authorList>
    </citation>
    <scope>NUCLEOTIDE SEQUENCE [LARGE SCALE GENOMIC DNA]</scope>
    <source>
        <strain>ATCC BAA-1114 / GMI1000</strain>
    </source>
</reference>
<feature type="chain" id="PRO_0000362753" description="NADH-quinone oxidoreductase subunit A">
    <location>
        <begin position="1"/>
        <end position="119"/>
    </location>
</feature>
<feature type="transmembrane region" description="Helical" evidence="1">
    <location>
        <begin position="7"/>
        <end position="27"/>
    </location>
</feature>
<feature type="transmembrane region" description="Helical" evidence="1">
    <location>
        <begin position="63"/>
        <end position="83"/>
    </location>
</feature>
<feature type="transmembrane region" description="Helical" evidence="1">
    <location>
        <begin position="88"/>
        <end position="108"/>
    </location>
</feature>
<organism>
    <name type="scientific">Ralstonia nicotianae (strain ATCC BAA-1114 / GMI1000)</name>
    <name type="common">Ralstonia solanacearum</name>
    <dbReference type="NCBI Taxonomy" id="267608"/>
    <lineage>
        <taxon>Bacteria</taxon>
        <taxon>Pseudomonadati</taxon>
        <taxon>Pseudomonadota</taxon>
        <taxon>Betaproteobacteria</taxon>
        <taxon>Burkholderiales</taxon>
        <taxon>Burkholderiaceae</taxon>
        <taxon>Ralstonia</taxon>
        <taxon>Ralstonia solanacearum species complex</taxon>
    </lineage>
</organism>
<evidence type="ECO:0000255" key="1">
    <source>
        <dbReference type="HAMAP-Rule" id="MF_01394"/>
    </source>
</evidence>
<sequence>MNLEAYFPVLLFIIIGVGLGLALMTIGRILGPNNPDPDKLSPYECGFEAFEDARMKFDVRYYLIAILFILFDLETAFLFPWGVALRDIGWPGFFAMGVFLLEFLVGFVYIWKKGALDWE</sequence>
<accession>Q8XXQ1</accession>
<comment type="function">
    <text evidence="1">NDH-1 shuttles electrons from NADH, via FMN and iron-sulfur (Fe-S) centers, to quinones in the respiratory chain. The immediate electron acceptor for the enzyme in this species is believed to be ubiquinone. Couples the redox reaction to proton translocation (for every two electrons transferred, four hydrogen ions are translocated across the cytoplasmic membrane), and thus conserves the redox energy in a proton gradient.</text>
</comment>
<comment type="catalytic activity">
    <reaction evidence="1">
        <text>a quinone + NADH + 5 H(+)(in) = a quinol + NAD(+) + 4 H(+)(out)</text>
        <dbReference type="Rhea" id="RHEA:57888"/>
        <dbReference type="ChEBI" id="CHEBI:15378"/>
        <dbReference type="ChEBI" id="CHEBI:24646"/>
        <dbReference type="ChEBI" id="CHEBI:57540"/>
        <dbReference type="ChEBI" id="CHEBI:57945"/>
        <dbReference type="ChEBI" id="CHEBI:132124"/>
    </reaction>
</comment>
<comment type="subunit">
    <text evidence="1">NDH-1 is composed of 14 different subunits. Subunits NuoA, H, J, K, L, M, N constitute the membrane sector of the complex.</text>
</comment>
<comment type="subcellular location">
    <subcellularLocation>
        <location evidence="1">Cell inner membrane</location>
        <topology evidence="1">Multi-pass membrane protein</topology>
    </subcellularLocation>
</comment>
<comment type="similarity">
    <text evidence="1">Belongs to the complex I subunit 3 family.</text>
</comment>